<gene>
    <name evidence="1" type="primary">hisB</name>
    <name type="ordered locus">MSMEG_3207</name>
    <name type="ordered locus">MSMEI_3125</name>
</gene>
<name>HIS7_MYCS2</name>
<keyword id="KW-0028">Amino-acid biosynthesis</keyword>
<keyword id="KW-0963">Cytoplasm</keyword>
<keyword id="KW-0368">Histidine biosynthesis</keyword>
<keyword id="KW-0456">Lyase</keyword>
<keyword id="KW-1185">Reference proteome</keyword>
<organism>
    <name type="scientific">Mycolicibacterium smegmatis (strain ATCC 700084 / mc(2)155)</name>
    <name type="common">Mycobacterium smegmatis</name>
    <dbReference type="NCBI Taxonomy" id="246196"/>
    <lineage>
        <taxon>Bacteria</taxon>
        <taxon>Bacillati</taxon>
        <taxon>Actinomycetota</taxon>
        <taxon>Actinomycetes</taxon>
        <taxon>Mycobacteriales</taxon>
        <taxon>Mycobacteriaceae</taxon>
        <taxon>Mycolicibacterium</taxon>
    </lineage>
</organism>
<protein>
    <recommendedName>
        <fullName evidence="1">Imidazoleglycerol-phosphate dehydratase</fullName>
        <shortName evidence="1">IGPD</shortName>
        <ecNumber evidence="1">4.2.1.19</ecNumber>
    </recommendedName>
</protein>
<dbReference type="EC" id="4.2.1.19" evidence="1"/>
<dbReference type="EMBL" id="CP000480">
    <property type="protein sequence ID" value="ABK75479.1"/>
    <property type="molecule type" value="Genomic_DNA"/>
</dbReference>
<dbReference type="EMBL" id="CP001663">
    <property type="protein sequence ID" value="AFP39589.1"/>
    <property type="molecule type" value="Genomic_DNA"/>
</dbReference>
<dbReference type="RefSeq" id="WP_011728897.1">
    <property type="nucleotide sequence ID" value="NZ_SIJM01000015.1"/>
</dbReference>
<dbReference type="RefSeq" id="YP_887521.1">
    <property type="nucleotide sequence ID" value="NC_008596.1"/>
</dbReference>
<dbReference type="SMR" id="A0QX83"/>
<dbReference type="STRING" id="246196.MSMEG_3207"/>
<dbReference type="PaxDb" id="246196-MSMEI_3125"/>
<dbReference type="GeneID" id="93457976"/>
<dbReference type="KEGG" id="msb:LJ00_15945"/>
<dbReference type="KEGG" id="msg:MSMEI_3125"/>
<dbReference type="KEGG" id="msm:MSMEG_3207"/>
<dbReference type="PATRIC" id="fig|246196.19.peg.3169"/>
<dbReference type="eggNOG" id="COG0131">
    <property type="taxonomic scope" value="Bacteria"/>
</dbReference>
<dbReference type="OrthoDB" id="9790411at2"/>
<dbReference type="UniPathway" id="UPA00031">
    <property type="reaction ID" value="UER00011"/>
</dbReference>
<dbReference type="Proteomes" id="UP000000757">
    <property type="component" value="Chromosome"/>
</dbReference>
<dbReference type="Proteomes" id="UP000006158">
    <property type="component" value="Chromosome"/>
</dbReference>
<dbReference type="GO" id="GO:0005737">
    <property type="term" value="C:cytoplasm"/>
    <property type="evidence" value="ECO:0007669"/>
    <property type="project" value="UniProtKB-SubCell"/>
</dbReference>
<dbReference type="GO" id="GO:0004424">
    <property type="term" value="F:imidazoleglycerol-phosphate dehydratase activity"/>
    <property type="evidence" value="ECO:0007669"/>
    <property type="project" value="UniProtKB-UniRule"/>
</dbReference>
<dbReference type="GO" id="GO:0000105">
    <property type="term" value="P:L-histidine biosynthetic process"/>
    <property type="evidence" value="ECO:0007669"/>
    <property type="project" value="UniProtKB-UniRule"/>
</dbReference>
<dbReference type="CDD" id="cd07914">
    <property type="entry name" value="IGPD"/>
    <property type="match status" value="1"/>
</dbReference>
<dbReference type="FunFam" id="3.30.230.40:FF:000001">
    <property type="entry name" value="Imidazoleglycerol-phosphate dehydratase HisB"/>
    <property type="match status" value="1"/>
</dbReference>
<dbReference type="FunFam" id="3.30.230.40:FF:000003">
    <property type="entry name" value="Imidazoleglycerol-phosphate dehydratase HisB"/>
    <property type="match status" value="1"/>
</dbReference>
<dbReference type="Gene3D" id="3.30.230.40">
    <property type="entry name" value="Imidazole glycerol phosphate dehydratase, domain 1"/>
    <property type="match status" value="2"/>
</dbReference>
<dbReference type="HAMAP" id="MF_00076">
    <property type="entry name" value="HisB"/>
    <property type="match status" value="1"/>
</dbReference>
<dbReference type="InterPro" id="IPR038494">
    <property type="entry name" value="IGPD_sf"/>
</dbReference>
<dbReference type="InterPro" id="IPR000807">
    <property type="entry name" value="ImidazoleglycerolP_deHydtase"/>
</dbReference>
<dbReference type="InterPro" id="IPR020565">
    <property type="entry name" value="ImidazoleglycerP_deHydtase_CS"/>
</dbReference>
<dbReference type="InterPro" id="IPR020568">
    <property type="entry name" value="Ribosomal_Su5_D2-typ_SF"/>
</dbReference>
<dbReference type="NCBIfam" id="NF002110">
    <property type="entry name" value="PRK00951.1-6"/>
    <property type="match status" value="1"/>
</dbReference>
<dbReference type="NCBIfam" id="NF002111">
    <property type="entry name" value="PRK00951.2-1"/>
    <property type="match status" value="1"/>
</dbReference>
<dbReference type="NCBIfam" id="NF002114">
    <property type="entry name" value="PRK00951.2-4"/>
    <property type="match status" value="1"/>
</dbReference>
<dbReference type="PANTHER" id="PTHR23133:SF2">
    <property type="entry name" value="IMIDAZOLEGLYCEROL-PHOSPHATE DEHYDRATASE"/>
    <property type="match status" value="1"/>
</dbReference>
<dbReference type="PANTHER" id="PTHR23133">
    <property type="entry name" value="IMIDAZOLEGLYCEROL-PHOSPHATE DEHYDRATASE HIS7"/>
    <property type="match status" value="1"/>
</dbReference>
<dbReference type="Pfam" id="PF00475">
    <property type="entry name" value="IGPD"/>
    <property type="match status" value="1"/>
</dbReference>
<dbReference type="SUPFAM" id="SSF54211">
    <property type="entry name" value="Ribosomal protein S5 domain 2-like"/>
    <property type="match status" value="2"/>
</dbReference>
<dbReference type="PROSITE" id="PS00954">
    <property type="entry name" value="IGP_DEHYDRATASE_1"/>
    <property type="match status" value="1"/>
</dbReference>
<dbReference type="PROSITE" id="PS00955">
    <property type="entry name" value="IGP_DEHYDRATASE_2"/>
    <property type="match status" value="1"/>
</dbReference>
<sequence length="206" mass="22385">MSALANRRARVERKTKESEIVVDLDLDGTGVVDIDTGVPFFDHMLTSLGSHASFDLTVHAKGDIEIEGHHTVEDTAIVLGQALGQALGDKKGIRRFGDAFIPMDESLAHAAVDVSGRPYFVHTGEPESMVSFTIAGTGAPYHTVINRHVFESLAFNARIALHVRTLYGRDPHHITEAQYKAVARALRQAVEYDARVTGVPSTKGTL</sequence>
<comment type="catalytic activity">
    <reaction evidence="1">
        <text>D-erythro-1-(imidazol-4-yl)glycerol 3-phosphate = 3-(imidazol-4-yl)-2-oxopropyl phosphate + H2O</text>
        <dbReference type="Rhea" id="RHEA:11040"/>
        <dbReference type="ChEBI" id="CHEBI:15377"/>
        <dbReference type="ChEBI" id="CHEBI:57766"/>
        <dbReference type="ChEBI" id="CHEBI:58278"/>
        <dbReference type="EC" id="4.2.1.19"/>
    </reaction>
</comment>
<comment type="pathway">
    <text evidence="1">Amino-acid biosynthesis; L-histidine biosynthesis; L-histidine from 5-phospho-alpha-D-ribose 1-diphosphate: step 6/9.</text>
</comment>
<comment type="subcellular location">
    <subcellularLocation>
        <location evidence="1">Cytoplasm</location>
    </subcellularLocation>
</comment>
<comment type="similarity">
    <text evidence="1">Belongs to the imidazoleglycerol-phosphate dehydratase family.</text>
</comment>
<evidence type="ECO:0000255" key="1">
    <source>
        <dbReference type="HAMAP-Rule" id="MF_00076"/>
    </source>
</evidence>
<evidence type="ECO:0000269" key="2">
    <source>
    </source>
</evidence>
<reference key="1">
    <citation type="submission" date="2006-10" db="EMBL/GenBank/DDBJ databases">
        <authorList>
            <person name="Fleischmann R.D."/>
            <person name="Dodson R.J."/>
            <person name="Haft D.H."/>
            <person name="Merkel J.S."/>
            <person name="Nelson W.C."/>
            <person name="Fraser C.M."/>
        </authorList>
    </citation>
    <scope>NUCLEOTIDE SEQUENCE [LARGE SCALE GENOMIC DNA]</scope>
    <source>
        <strain>ATCC 700084 / mc(2)155</strain>
    </source>
</reference>
<reference key="2">
    <citation type="journal article" date="2007" name="Genome Biol.">
        <title>Interrupted coding sequences in Mycobacterium smegmatis: authentic mutations or sequencing errors?</title>
        <authorList>
            <person name="Deshayes C."/>
            <person name="Perrodou E."/>
            <person name="Gallien S."/>
            <person name="Euphrasie D."/>
            <person name="Schaeffer C."/>
            <person name="Van-Dorsselaer A."/>
            <person name="Poch O."/>
            <person name="Lecompte O."/>
            <person name="Reyrat J.-M."/>
        </authorList>
    </citation>
    <scope>NUCLEOTIDE SEQUENCE [LARGE SCALE GENOMIC DNA]</scope>
    <source>
        <strain>ATCC 700084 / mc(2)155</strain>
    </source>
</reference>
<reference key="3">
    <citation type="journal article" date="2009" name="Genome Res.">
        <title>Ortho-proteogenomics: multiple proteomes investigation through orthology and a new MS-based protocol.</title>
        <authorList>
            <person name="Gallien S."/>
            <person name="Perrodou E."/>
            <person name="Carapito C."/>
            <person name="Deshayes C."/>
            <person name="Reyrat J.-M."/>
            <person name="Van Dorsselaer A."/>
            <person name="Poch O."/>
            <person name="Schaeffer C."/>
            <person name="Lecompte O."/>
        </authorList>
    </citation>
    <scope>NUCLEOTIDE SEQUENCE [LARGE SCALE GENOMIC DNA]</scope>
    <scope>IDENTIFICATION BY MASS SPECTROMETRY [LARGE SCALE ANALYSIS]</scope>
    <scope>CLEAVAGE OF INITIATOR METHIONINE</scope>
    <source>
        <strain>ATCC 700084 / mc(2)155</strain>
    </source>
</reference>
<accession>A0QX83</accession>
<accession>I7GAQ5</accession>
<feature type="initiator methionine" description="Removed" evidence="2">
    <location>
        <position position="1"/>
    </location>
</feature>
<feature type="chain" id="PRO_0000336324" description="Imidazoleglycerol-phosphate dehydratase">
    <location>
        <begin position="2"/>
        <end position="206"/>
    </location>
</feature>
<proteinExistence type="evidence at protein level"/>